<accession>B2SDZ6</accession>
<keyword id="KW-0963">Cytoplasm</keyword>
<keyword id="KW-0251">Elongation factor</keyword>
<keyword id="KW-0648">Protein biosynthesis</keyword>
<feature type="chain" id="PRO_1000116740" description="Elongation factor Ts">
    <location>
        <begin position="1"/>
        <end position="289"/>
    </location>
</feature>
<feature type="region of interest" description="Involved in Mg(2+) ion dislocation from EF-Tu" evidence="1">
    <location>
        <begin position="80"/>
        <end position="83"/>
    </location>
</feature>
<comment type="function">
    <text evidence="1">Associates with the EF-Tu.GDP complex and induces the exchange of GDP to GTP. It remains bound to the aminoacyl-tRNA.EF-Tu.GTP complex up to the GTP hydrolysis stage on the ribosome.</text>
</comment>
<comment type="subcellular location">
    <subcellularLocation>
        <location evidence="1">Cytoplasm</location>
    </subcellularLocation>
</comment>
<comment type="similarity">
    <text evidence="1">Belongs to the EF-Ts family.</text>
</comment>
<sequence>MSNISAKLVKELRERTGAGMMECKKALVAAAGDIEKAAEEMRISGQAKADKKASRVAAEGVIEVYAADGRAILLEINSETDFVARDETFKKFAQEAVKAAHAANAKTIEEVLAAKTSNGETVEEARKSLIAKIGENIQVRRVKTVEAETLGAYIHGSKIGVVAALEGGDEDLAKDVAMHVAAANPMVVSGDQVPADVVAKEKEIFTAQAKESGKPAEIIEKMIVGRIRKFLDEVALLGQDFVKDPAIKVEKLVKDKGAKVVNFIRLDVGEGIEKKEEDFAAEVMSQIKG</sequence>
<reference key="1">
    <citation type="journal article" date="2009" name="PLoS Pathog.">
        <title>Molecular evolutionary consequences of niche restriction in Francisella tularensis, a facultative intracellular pathogen.</title>
        <authorList>
            <person name="Larsson P."/>
            <person name="Elfsmark D."/>
            <person name="Svensson K."/>
            <person name="Wikstroem P."/>
            <person name="Forsman M."/>
            <person name="Brettin T."/>
            <person name="Keim P."/>
            <person name="Johansson A."/>
        </authorList>
    </citation>
    <scope>NUCLEOTIDE SEQUENCE [LARGE SCALE GENOMIC DNA]</scope>
    <source>
        <strain>FSC147</strain>
    </source>
</reference>
<protein>
    <recommendedName>
        <fullName evidence="1">Elongation factor Ts</fullName>
        <shortName evidence="1">EF-Ts</shortName>
    </recommendedName>
</protein>
<organism>
    <name type="scientific">Francisella tularensis subsp. mediasiatica (strain FSC147)</name>
    <dbReference type="NCBI Taxonomy" id="441952"/>
    <lineage>
        <taxon>Bacteria</taxon>
        <taxon>Pseudomonadati</taxon>
        <taxon>Pseudomonadota</taxon>
        <taxon>Gammaproteobacteria</taxon>
        <taxon>Thiotrichales</taxon>
        <taxon>Francisellaceae</taxon>
        <taxon>Francisella</taxon>
    </lineage>
</organism>
<dbReference type="EMBL" id="CP000915">
    <property type="protein sequence ID" value="ACD31360.1"/>
    <property type="molecule type" value="Genomic_DNA"/>
</dbReference>
<dbReference type="SMR" id="B2SDZ6"/>
<dbReference type="KEGG" id="ftm:FTM_1538"/>
<dbReference type="HOGENOM" id="CLU_047155_0_2_6"/>
<dbReference type="GO" id="GO:0005737">
    <property type="term" value="C:cytoplasm"/>
    <property type="evidence" value="ECO:0007669"/>
    <property type="project" value="UniProtKB-SubCell"/>
</dbReference>
<dbReference type="GO" id="GO:0003746">
    <property type="term" value="F:translation elongation factor activity"/>
    <property type="evidence" value="ECO:0007669"/>
    <property type="project" value="UniProtKB-UniRule"/>
</dbReference>
<dbReference type="CDD" id="cd14275">
    <property type="entry name" value="UBA_EF-Ts"/>
    <property type="match status" value="1"/>
</dbReference>
<dbReference type="FunFam" id="1.10.286.20:FF:000001">
    <property type="entry name" value="Elongation factor Ts"/>
    <property type="match status" value="1"/>
</dbReference>
<dbReference type="FunFam" id="1.10.8.10:FF:000001">
    <property type="entry name" value="Elongation factor Ts"/>
    <property type="match status" value="1"/>
</dbReference>
<dbReference type="Gene3D" id="1.10.286.20">
    <property type="match status" value="1"/>
</dbReference>
<dbReference type="Gene3D" id="1.10.8.10">
    <property type="entry name" value="DNA helicase RuvA subunit, C-terminal domain"/>
    <property type="match status" value="1"/>
</dbReference>
<dbReference type="Gene3D" id="3.30.479.20">
    <property type="entry name" value="Elongation factor Ts, dimerisation domain"/>
    <property type="match status" value="2"/>
</dbReference>
<dbReference type="HAMAP" id="MF_00050">
    <property type="entry name" value="EF_Ts"/>
    <property type="match status" value="1"/>
</dbReference>
<dbReference type="InterPro" id="IPR036402">
    <property type="entry name" value="EF-Ts_dimer_sf"/>
</dbReference>
<dbReference type="InterPro" id="IPR001816">
    <property type="entry name" value="Transl_elong_EFTs/EF1B"/>
</dbReference>
<dbReference type="InterPro" id="IPR014039">
    <property type="entry name" value="Transl_elong_EFTs/EF1B_dimer"/>
</dbReference>
<dbReference type="InterPro" id="IPR018101">
    <property type="entry name" value="Transl_elong_Ts_CS"/>
</dbReference>
<dbReference type="InterPro" id="IPR009060">
    <property type="entry name" value="UBA-like_sf"/>
</dbReference>
<dbReference type="NCBIfam" id="TIGR00116">
    <property type="entry name" value="tsf"/>
    <property type="match status" value="1"/>
</dbReference>
<dbReference type="PANTHER" id="PTHR11741">
    <property type="entry name" value="ELONGATION FACTOR TS"/>
    <property type="match status" value="1"/>
</dbReference>
<dbReference type="PANTHER" id="PTHR11741:SF0">
    <property type="entry name" value="ELONGATION FACTOR TS, MITOCHONDRIAL"/>
    <property type="match status" value="1"/>
</dbReference>
<dbReference type="Pfam" id="PF00889">
    <property type="entry name" value="EF_TS"/>
    <property type="match status" value="1"/>
</dbReference>
<dbReference type="SUPFAM" id="SSF54713">
    <property type="entry name" value="Elongation factor Ts (EF-Ts), dimerisation domain"/>
    <property type="match status" value="2"/>
</dbReference>
<dbReference type="SUPFAM" id="SSF46934">
    <property type="entry name" value="UBA-like"/>
    <property type="match status" value="1"/>
</dbReference>
<dbReference type="PROSITE" id="PS01126">
    <property type="entry name" value="EF_TS_1"/>
    <property type="match status" value="1"/>
</dbReference>
<dbReference type="PROSITE" id="PS01127">
    <property type="entry name" value="EF_TS_2"/>
    <property type="match status" value="1"/>
</dbReference>
<gene>
    <name evidence="1" type="primary">tsf</name>
    <name type="ordered locus">FTM_1538</name>
</gene>
<proteinExistence type="inferred from homology"/>
<evidence type="ECO:0000255" key="1">
    <source>
        <dbReference type="HAMAP-Rule" id="MF_00050"/>
    </source>
</evidence>
<name>EFTS_FRATM</name>